<comment type="function">
    <text>Affects cell viability at low temperatures.</text>
</comment>
<comment type="subunit">
    <text>Homodimer.</text>
</comment>
<comment type="subcellular location">
    <subcellularLocation>
        <location>Cytoplasm</location>
    </subcellularLocation>
</comment>
<comment type="induction">
    <text evidence="1">In response to low temperature.</text>
</comment>
<organism>
    <name type="scientific">Bacillus caldolyticus</name>
    <dbReference type="NCBI Taxonomy" id="1394"/>
    <lineage>
        <taxon>Bacteria</taxon>
        <taxon>Bacillati</taxon>
        <taxon>Bacillota</taxon>
        <taxon>Bacilli</taxon>
        <taxon>Bacillales</taxon>
        <taxon>Anoxybacillaceae</taxon>
        <taxon>Geobacillus</taxon>
        <taxon>Geobacillus thermoleovorans group</taxon>
    </lineage>
</organism>
<reference key="1">
    <citation type="journal article" date="1993" name="Gene">
        <title>Mapping of the Bacillus subtilis cspB gene and cloning of its homologs in thermophilic, mesophilic and psychrotrophic bacilli.</title>
        <authorList>
            <person name="Schroeder K."/>
            <person name="Zuber P."/>
            <person name="Willimsky G."/>
            <person name="Wagner B."/>
            <person name="Marahiel M.A."/>
        </authorList>
    </citation>
    <scope>NUCLEOTIDE SEQUENCE [GENOMIC DNA]</scope>
</reference>
<reference key="2">
    <citation type="journal article" date="2000" name="J. Mol. Biol.">
        <title>Thermal stability and atomic-resolution crystal structure of the Bacillus caldolyticus cold shock protein.</title>
        <authorList>
            <person name="Mueller U."/>
            <person name="Perl D."/>
            <person name="Schmid F.X."/>
            <person name="Heinemann U."/>
        </authorList>
    </citation>
    <scope>X-RAY CRYSTALLOGRAPHY (1.17 ANGSTROMS)</scope>
</reference>
<name>CSPB_BACCL</name>
<feature type="chain" id="PRO_0000100280" description="Cold shock protein CspB">
    <location>
        <begin position="1"/>
        <end position="66"/>
    </location>
</feature>
<feature type="domain" description="CSD">
    <location>
        <begin position="4"/>
        <end position="63"/>
    </location>
</feature>
<feature type="strand" evidence="2">
    <location>
        <begin position="2"/>
        <end position="10"/>
    </location>
</feature>
<feature type="turn" evidence="2">
    <location>
        <begin position="11"/>
        <end position="14"/>
    </location>
</feature>
<feature type="strand" evidence="2">
    <location>
        <begin position="15"/>
        <end position="20"/>
    </location>
</feature>
<feature type="strand" evidence="2">
    <location>
        <begin position="23"/>
        <end position="29"/>
    </location>
</feature>
<feature type="helix" evidence="2">
    <location>
        <begin position="30"/>
        <end position="32"/>
    </location>
</feature>
<feature type="strand" evidence="2">
    <location>
        <begin position="35"/>
        <end position="37"/>
    </location>
</feature>
<feature type="strand" evidence="2">
    <location>
        <begin position="46"/>
        <end position="54"/>
    </location>
</feature>
<feature type="strand" evidence="2">
    <location>
        <begin position="57"/>
        <end position="65"/>
    </location>
</feature>
<keyword id="KW-0002">3D-structure</keyword>
<keyword id="KW-0010">Activator</keyword>
<keyword id="KW-0963">Cytoplasm</keyword>
<keyword id="KW-0238">DNA-binding</keyword>
<keyword id="KW-0346">Stress response</keyword>
<keyword id="KW-0804">Transcription</keyword>
<keyword id="KW-0805">Transcription regulation</keyword>
<gene>
    <name type="primary">cspB</name>
</gene>
<protein>
    <recommendedName>
        <fullName>Cold shock protein CspB</fullName>
    </recommendedName>
</protein>
<proteinExistence type="evidence at protein level"/>
<dbReference type="EMBL" id="X73373">
    <property type="protein sequence ID" value="CAA51790.1"/>
    <property type="molecule type" value="Genomic_DNA"/>
</dbReference>
<dbReference type="PIR" id="I40158">
    <property type="entry name" value="I40158"/>
</dbReference>
<dbReference type="PDB" id="1C9O">
    <property type="method" value="X-ray"/>
    <property type="resolution" value="1.17 A"/>
    <property type="chains" value="A/B=1-66"/>
</dbReference>
<dbReference type="PDB" id="1HZ9">
    <property type="method" value="X-ray"/>
    <property type="resolution" value="1.80 A"/>
    <property type="chains" value="A/B=1-66"/>
</dbReference>
<dbReference type="PDB" id="1HZA">
    <property type="method" value="X-ray"/>
    <property type="resolution" value="1.80 A"/>
    <property type="chains" value="A/B=1-66"/>
</dbReference>
<dbReference type="PDB" id="1HZB">
    <property type="method" value="X-ray"/>
    <property type="resolution" value="1.28 A"/>
    <property type="chains" value="A/B=1-66"/>
</dbReference>
<dbReference type="PDB" id="1HZC">
    <property type="method" value="X-ray"/>
    <property type="resolution" value="1.32 A"/>
    <property type="chains" value="A/B=1-66"/>
</dbReference>
<dbReference type="PDB" id="1I5F">
    <property type="method" value="X-ray"/>
    <property type="resolution" value="1.40 A"/>
    <property type="chains" value="A/B=1-66"/>
</dbReference>
<dbReference type="PDB" id="2HAX">
    <property type="method" value="X-ray"/>
    <property type="resolution" value="1.29 A"/>
    <property type="chains" value="A/B=1-66"/>
</dbReference>
<dbReference type="PDB" id="5JX4">
    <property type="method" value="X-ray"/>
    <property type="resolution" value="1.80 A"/>
    <property type="chains" value="A/B=1-66"/>
</dbReference>
<dbReference type="PDBsum" id="1C9O"/>
<dbReference type="PDBsum" id="1HZ9"/>
<dbReference type="PDBsum" id="1HZA"/>
<dbReference type="PDBsum" id="1HZB"/>
<dbReference type="PDBsum" id="1HZC"/>
<dbReference type="PDBsum" id="1I5F"/>
<dbReference type="PDBsum" id="2HAX"/>
<dbReference type="PDBsum" id="5JX4"/>
<dbReference type="SMR" id="P41016"/>
<dbReference type="EvolutionaryTrace" id="P41016"/>
<dbReference type="GO" id="GO:0005737">
    <property type="term" value="C:cytoplasm"/>
    <property type="evidence" value="ECO:0007669"/>
    <property type="project" value="UniProtKB-SubCell"/>
</dbReference>
<dbReference type="GO" id="GO:0003677">
    <property type="term" value="F:DNA binding"/>
    <property type="evidence" value="ECO:0007669"/>
    <property type="project" value="UniProtKB-KW"/>
</dbReference>
<dbReference type="CDD" id="cd04458">
    <property type="entry name" value="CSP_CDS"/>
    <property type="match status" value="1"/>
</dbReference>
<dbReference type="FunFam" id="2.40.50.140:FF:000006">
    <property type="entry name" value="Cold shock protein CspC"/>
    <property type="match status" value="1"/>
</dbReference>
<dbReference type="Gene3D" id="6.20.370.130">
    <property type="match status" value="1"/>
</dbReference>
<dbReference type="Gene3D" id="2.40.50.140">
    <property type="entry name" value="Nucleic acid-binding proteins"/>
    <property type="match status" value="1"/>
</dbReference>
<dbReference type="InterPro" id="IPR012156">
    <property type="entry name" value="Cold_shock_CspA"/>
</dbReference>
<dbReference type="InterPro" id="IPR050181">
    <property type="entry name" value="Cold_shock_domain"/>
</dbReference>
<dbReference type="InterPro" id="IPR011129">
    <property type="entry name" value="CSD"/>
</dbReference>
<dbReference type="InterPro" id="IPR019844">
    <property type="entry name" value="CSD_CS"/>
</dbReference>
<dbReference type="InterPro" id="IPR002059">
    <property type="entry name" value="CSP_DNA-bd"/>
</dbReference>
<dbReference type="InterPro" id="IPR012340">
    <property type="entry name" value="NA-bd_OB-fold"/>
</dbReference>
<dbReference type="PANTHER" id="PTHR11544">
    <property type="entry name" value="COLD SHOCK DOMAIN CONTAINING PROTEINS"/>
    <property type="match status" value="1"/>
</dbReference>
<dbReference type="Pfam" id="PF00313">
    <property type="entry name" value="CSD"/>
    <property type="match status" value="1"/>
</dbReference>
<dbReference type="PIRSF" id="PIRSF002599">
    <property type="entry name" value="Cold_shock_A"/>
    <property type="match status" value="1"/>
</dbReference>
<dbReference type="PRINTS" id="PR00050">
    <property type="entry name" value="COLDSHOCK"/>
</dbReference>
<dbReference type="SMART" id="SM00357">
    <property type="entry name" value="CSP"/>
    <property type="match status" value="1"/>
</dbReference>
<dbReference type="SUPFAM" id="SSF50249">
    <property type="entry name" value="Nucleic acid-binding proteins"/>
    <property type="match status" value="1"/>
</dbReference>
<dbReference type="PROSITE" id="PS00352">
    <property type="entry name" value="CSD_1"/>
    <property type="match status" value="1"/>
</dbReference>
<dbReference type="PROSITE" id="PS51857">
    <property type="entry name" value="CSD_2"/>
    <property type="match status" value="1"/>
</dbReference>
<accession>P41016</accession>
<sequence>MQRGKVKWFNNEKGYGFIEVEGGSDVFVHFTAIQGEGFKTLEEGQEVSFEIVQGNRGPQAANVVKL</sequence>
<evidence type="ECO:0000250" key="1"/>
<evidence type="ECO:0007829" key="2">
    <source>
        <dbReference type="PDB" id="1C9O"/>
    </source>
</evidence>